<accession>O62420</accession>
<accession>Q94074</accession>
<name>SRA39_CAEEL</name>
<dbReference type="EMBL" id="Z78546">
    <property type="protein sequence ID" value="CAB01772.1"/>
    <property type="molecule type" value="Genomic_DNA"/>
</dbReference>
<dbReference type="EMBL" id="AL023830">
    <property type="protein sequence ID" value="CAB01772.1"/>
    <property type="status" value="JOINED"/>
    <property type="molecule type" value="Genomic_DNA"/>
</dbReference>
<dbReference type="PIR" id="T25089">
    <property type="entry name" value="T25089"/>
</dbReference>
<dbReference type="RefSeq" id="NP_510315.1">
    <property type="nucleotide sequence ID" value="NM_077914.2"/>
</dbReference>
<dbReference type="SMR" id="O62420"/>
<dbReference type="FunCoup" id="O62420">
    <property type="interactions" value="3"/>
</dbReference>
<dbReference type="PaxDb" id="6239-T21H8.4"/>
<dbReference type="EnsemblMetazoa" id="T21H8.4.1">
    <property type="protein sequence ID" value="T21H8.4.1"/>
    <property type="gene ID" value="WBGene00005065"/>
</dbReference>
<dbReference type="GeneID" id="188708"/>
<dbReference type="KEGG" id="cel:CELE_T21H8.4"/>
<dbReference type="UCSC" id="T21H8.4">
    <property type="organism name" value="c. elegans"/>
</dbReference>
<dbReference type="AGR" id="WB:WBGene00005065"/>
<dbReference type="CTD" id="188708"/>
<dbReference type="WormBase" id="T21H8.4">
    <property type="protein sequence ID" value="CE16438"/>
    <property type="gene ID" value="WBGene00005065"/>
    <property type="gene designation" value="sra-39"/>
</dbReference>
<dbReference type="eggNOG" id="ENOG502T068">
    <property type="taxonomic scope" value="Eukaryota"/>
</dbReference>
<dbReference type="GeneTree" id="ENSGT00970000196905"/>
<dbReference type="HOGENOM" id="CLU_062304_0_0_1"/>
<dbReference type="InParanoid" id="O62420"/>
<dbReference type="OMA" id="IMPHMPF"/>
<dbReference type="OrthoDB" id="5799305at2759"/>
<dbReference type="PhylomeDB" id="O62420"/>
<dbReference type="PRO" id="PR:O62420"/>
<dbReference type="Proteomes" id="UP000001940">
    <property type="component" value="Chromosome X"/>
</dbReference>
<dbReference type="GO" id="GO:0016020">
    <property type="term" value="C:membrane"/>
    <property type="evidence" value="ECO:0007669"/>
    <property type="project" value="UniProtKB-SubCell"/>
</dbReference>
<dbReference type="GO" id="GO:0004984">
    <property type="term" value="F:olfactory receptor activity"/>
    <property type="evidence" value="ECO:0000318"/>
    <property type="project" value="GO_Central"/>
</dbReference>
<dbReference type="GO" id="GO:0050907">
    <property type="term" value="P:detection of chemical stimulus involved in sensory perception"/>
    <property type="evidence" value="ECO:0000318"/>
    <property type="project" value="GO_Central"/>
</dbReference>
<dbReference type="InterPro" id="IPR019408">
    <property type="entry name" value="7TM_GPCR_serpentine_rcpt_Srab"/>
</dbReference>
<dbReference type="InterPro" id="IPR051080">
    <property type="entry name" value="Nematode_rcpt-like_serp_alpha"/>
</dbReference>
<dbReference type="PANTHER" id="PTHR31357:SF16">
    <property type="entry name" value="G_PROTEIN_RECEP_F1_2 DOMAIN-CONTAINING PROTEIN-RELATED"/>
    <property type="match status" value="1"/>
</dbReference>
<dbReference type="PANTHER" id="PTHR31357">
    <property type="entry name" value="SERPENTINE RECEPTOR CLASS ALPHA-10"/>
    <property type="match status" value="1"/>
</dbReference>
<dbReference type="Pfam" id="PF10292">
    <property type="entry name" value="7TM_GPCR_Srab"/>
    <property type="match status" value="1"/>
</dbReference>
<protein>
    <recommendedName>
        <fullName>Serpentine receptor class alpha-39</fullName>
        <shortName>Protein sra-39</shortName>
    </recommendedName>
</protein>
<reference key="1">
    <citation type="journal article" date="1998" name="Science">
        <title>Genome sequence of the nematode C. elegans: a platform for investigating biology.</title>
        <authorList>
            <consortium name="The C. elegans sequencing consortium"/>
        </authorList>
    </citation>
    <scope>NUCLEOTIDE SEQUENCE [LARGE SCALE GENOMIC DNA]</scope>
    <source>
        <strain>Bristol N2</strain>
    </source>
</reference>
<feature type="chain" id="PRO_0000104495" description="Serpentine receptor class alpha-39">
    <location>
        <begin position="1"/>
        <end position="375"/>
    </location>
</feature>
<feature type="transmembrane region" description="Helical" evidence="1">
    <location>
        <begin position="17"/>
        <end position="37"/>
    </location>
</feature>
<feature type="transmembrane region" description="Helical" evidence="1">
    <location>
        <begin position="51"/>
        <end position="71"/>
    </location>
</feature>
<feature type="transmembrane region" description="Helical" evidence="1">
    <location>
        <begin position="99"/>
        <end position="119"/>
    </location>
</feature>
<feature type="transmembrane region" description="Helical" evidence="1">
    <location>
        <begin position="138"/>
        <end position="158"/>
    </location>
</feature>
<feature type="transmembrane region" description="Helical" evidence="1">
    <location>
        <begin position="183"/>
        <end position="203"/>
    </location>
</feature>
<feature type="transmembrane region" description="Helical" evidence="1">
    <location>
        <begin position="236"/>
        <end position="256"/>
    </location>
</feature>
<feature type="transmembrane region" description="Helical" evidence="1">
    <location>
        <begin position="275"/>
        <end position="295"/>
    </location>
</feature>
<gene>
    <name type="primary">sra-39</name>
    <name type="ORF">T21H8.4</name>
</gene>
<keyword id="KW-0472">Membrane</keyword>
<keyword id="KW-1185">Reference proteome</keyword>
<keyword id="KW-0812">Transmembrane</keyword>
<keyword id="KW-1133">Transmembrane helix</keyword>
<proteinExistence type="inferred from homology"/>
<evidence type="ECO:0000255" key="1"/>
<evidence type="ECO:0000305" key="2"/>
<organism>
    <name type="scientific">Caenorhabditis elegans</name>
    <dbReference type="NCBI Taxonomy" id="6239"/>
    <lineage>
        <taxon>Eukaryota</taxon>
        <taxon>Metazoa</taxon>
        <taxon>Ecdysozoa</taxon>
        <taxon>Nematoda</taxon>
        <taxon>Chromadorea</taxon>
        <taxon>Rhabditida</taxon>
        <taxon>Rhabditina</taxon>
        <taxon>Rhabditomorpha</taxon>
        <taxon>Rhabditoidea</taxon>
        <taxon>Rhabditidae</taxon>
        <taxon>Peloderinae</taxon>
        <taxon>Caenorhabditis</taxon>
    </lineage>
</organism>
<sequence length="375" mass="42784">MEGCETRGQLYYHPAYLFAIIFQGTSGYLTFPILFIILKKYAFKVYYHPNLVFLMMLNVVSCLLLGGLTAWSATNFFLNLMIKPSPCDLLLKTYFCSKIRGTFLFAFCLVTTSHAGILLERSWATYSVKNYERQGRALGTILAIVAVAVAATAIFILLLPEDGEEMITTCLTFSASKSIGSRVYVMFFVQLLLDAVISIVHLVLYRYNKNIDKHGSTSLSEQFQRNENVKTLKQVTPLLILSNVTIGVYIFIVSVFRLYKDYLPPNWYEIIAANLFIMPHMPFMFTSLILVELWLGKKRQDRIHKDMMASQDVPLDDQFHIAMENWDVHFQSRLKAQARANRKPLSANWTSSTLITKFKKRQTTVAVISIPPSPS</sequence>
<comment type="subcellular location">
    <subcellularLocation>
        <location evidence="2">Membrane</location>
        <topology evidence="2">Multi-pass membrane protein</topology>
    </subcellularLocation>
</comment>
<comment type="similarity">
    <text evidence="2">Belongs to the nematode receptor-like protein sra family.</text>
</comment>